<keyword id="KW-0067">ATP-binding</keyword>
<keyword id="KW-0133">Cell shape</keyword>
<keyword id="KW-0961">Cell wall biogenesis/degradation</keyword>
<keyword id="KW-0963">Cytoplasm</keyword>
<keyword id="KW-0436">Ligase</keyword>
<keyword id="KW-0460">Magnesium</keyword>
<keyword id="KW-0464">Manganese</keyword>
<keyword id="KW-0479">Metal-binding</keyword>
<keyword id="KW-0547">Nucleotide-binding</keyword>
<keyword id="KW-0573">Peptidoglycan synthesis</keyword>
<keyword id="KW-1185">Reference proteome</keyword>
<name>DDL_STUS1</name>
<sequence>MMALQSTRDPKEFGRVAVLFGGKSAEREVSLKSGAAVLAALQAAGVDAFGIDAGDDLLQRLSSERIDRAFIVLHGRGGEDGSMQGLLECAGIPYTGSGILASALAMDKLRTKQVWQSLGLPTPRHAVLASEVDCQAAAQMLGFPLIVKPAHEGSSIGMAKVGDVAELIAAWRAASAYDAQVLVEQWIQGPEFTVAVLHGEVLPPIGLGTPHTFYDYDAKYLASDTQYRIPCGLDAAREEALKVLSARACEAVGIRGWARVDVMQDAEGNFWLLEVNTVPGMTDHSLVPMAARAAGLDFQQLVLSILDDSLEAGN</sequence>
<gene>
    <name evidence="2" type="primary">ddl</name>
    <name type="ordered locus">PST_1084</name>
</gene>
<proteinExistence type="inferred from homology"/>
<accession>A4VII0</accession>
<reference key="1">
    <citation type="journal article" date="2008" name="Proc. Natl. Acad. Sci. U.S.A.">
        <title>Nitrogen fixation island and rhizosphere competence traits in the genome of root-associated Pseudomonas stutzeri A1501.</title>
        <authorList>
            <person name="Yan Y."/>
            <person name="Yang J."/>
            <person name="Dou Y."/>
            <person name="Chen M."/>
            <person name="Ping S."/>
            <person name="Peng J."/>
            <person name="Lu W."/>
            <person name="Zhang W."/>
            <person name="Yao Z."/>
            <person name="Li H."/>
            <person name="Liu W."/>
            <person name="He S."/>
            <person name="Geng L."/>
            <person name="Zhang X."/>
            <person name="Yang F."/>
            <person name="Yu H."/>
            <person name="Zhan Y."/>
            <person name="Li D."/>
            <person name="Lin Z."/>
            <person name="Wang Y."/>
            <person name="Elmerich C."/>
            <person name="Lin M."/>
            <person name="Jin Q."/>
        </authorList>
    </citation>
    <scope>NUCLEOTIDE SEQUENCE [LARGE SCALE GENOMIC DNA]</scope>
    <source>
        <strain>A1501</strain>
    </source>
</reference>
<dbReference type="EC" id="6.3.2.4" evidence="2"/>
<dbReference type="EMBL" id="CP000304">
    <property type="protein sequence ID" value="ABP78781.1"/>
    <property type="molecule type" value="Genomic_DNA"/>
</dbReference>
<dbReference type="RefSeq" id="WP_011912271.1">
    <property type="nucleotide sequence ID" value="NC_009434.1"/>
</dbReference>
<dbReference type="SMR" id="A4VII0"/>
<dbReference type="KEGG" id="psa:PST_1084"/>
<dbReference type="eggNOG" id="COG1181">
    <property type="taxonomic scope" value="Bacteria"/>
</dbReference>
<dbReference type="HOGENOM" id="CLU_039268_1_2_6"/>
<dbReference type="UniPathway" id="UPA00219"/>
<dbReference type="Proteomes" id="UP000000233">
    <property type="component" value="Chromosome"/>
</dbReference>
<dbReference type="GO" id="GO:0005829">
    <property type="term" value="C:cytosol"/>
    <property type="evidence" value="ECO:0007669"/>
    <property type="project" value="TreeGrafter"/>
</dbReference>
<dbReference type="GO" id="GO:0005524">
    <property type="term" value="F:ATP binding"/>
    <property type="evidence" value="ECO:0007669"/>
    <property type="project" value="UniProtKB-KW"/>
</dbReference>
<dbReference type="GO" id="GO:0008716">
    <property type="term" value="F:D-alanine-D-alanine ligase activity"/>
    <property type="evidence" value="ECO:0007669"/>
    <property type="project" value="UniProtKB-UniRule"/>
</dbReference>
<dbReference type="GO" id="GO:0046872">
    <property type="term" value="F:metal ion binding"/>
    <property type="evidence" value="ECO:0007669"/>
    <property type="project" value="UniProtKB-KW"/>
</dbReference>
<dbReference type="GO" id="GO:0071555">
    <property type="term" value="P:cell wall organization"/>
    <property type="evidence" value="ECO:0007669"/>
    <property type="project" value="UniProtKB-KW"/>
</dbReference>
<dbReference type="GO" id="GO:0009252">
    <property type="term" value="P:peptidoglycan biosynthetic process"/>
    <property type="evidence" value="ECO:0007669"/>
    <property type="project" value="UniProtKB-UniRule"/>
</dbReference>
<dbReference type="GO" id="GO:0008360">
    <property type="term" value="P:regulation of cell shape"/>
    <property type="evidence" value="ECO:0007669"/>
    <property type="project" value="UniProtKB-KW"/>
</dbReference>
<dbReference type="FunFam" id="3.30.1490.20:FF:000007">
    <property type="entry name" value="D-alanine--D-alanine ligase"/>
    <property type="match status" value="1"/>
</dbReference>
<dbReference type="FunFam" id="3.30.470.20:FF:000008">
    <property type="entry name" value="D-alanine--D-alanine ligase"/>
    <property type="match status" value="1"/>
</dbReference>
<dbReference type="FunFam" id="3.40.50.20:FF:000013">
    <property type="entry name" value="D-alanine--D-alanine ligase"/>
    <property type="match status" value="1"/>
</dbReference>
<dbReference type="Gene3D" id="3.40.50.20">
    <property type="match status" value="1"/>
</dbReference>
<dbReference type="Gene3D" id="3.30.1490.20">
    <property type="entry name" value="ATP-grasp fold, A domain"/>
    <property type="match status" value="1"/>
</dbReference>
<dbReference type="Gene3D" id="3.30.470.20">
    <property type="entry name" value="ATP-grasp fold, B domain"/>
    <property type="match status" value="1"/>
</dbReference>
<dbReference type="HAMAP" id="MF_00047">
    <property type="entry name" value="Dala_Dala_lig"/>
    <property type="match status" value="1"/>
</dbReference>
<dbReference type="InterPro" id="IPR011761">
    <property type="entry name" value="ATP-grasp"/>
</dbReference>
<dbReference type="InterPro" id="IPR013815">
    <property type="entry name" value="ATP_grasp_subdomain_1"/>
</dbReference>
<dbReference type="InterPro" id="IPR000291">
    <property type="entry name" value="D-Ala_lig_Van_CS"/>
</dbReference>
<dbReference type="InterPro" id="IPR005905">
    <property type="entry name" value="D_ala_D_ala"/>
</dbReference>
<dbReference type="InterPro" id="IPR011095">
    <property type="entry name" value="Dala_Dala_lig_C"/>
</dbReference>
<dbReference type="InterPro" id="IPR011127">
    <property type="entry name" value="Dala_Dala_lig_N"/>
</dbReference>
<dbReference type="InterPro" id="IPR016185">
    <property type="entry name" value="PreATP-grasp_dom_sf"/>
</dbReference>
<dbReference type="NCBIfam" id="TIGR01205">
    <property type="entry name" value="D_ala_D_alaTIGR"/>
    <property type="match status" value="1"/>
</dbReference>
<dbReference type="NCBIfam" id="NF002378">
    <property type="entry name" value="PRK01372.1"/>
    <property type="match status" value="1"/>
</dbReference>
<dbReference type="PANTHER" id="PTHR23132">
    <property type="entry name" value="D-ALANINE--D-ALANINE LIGASE"/>
    <property type="match status" value="1"/>
</dbReference>
<dbReference type="PANTHER" id="PTHR23132:SF23">
    <property type="entry name" value="D-ALANINE--D-ALANINE LIGASE B"/>
    <property type="match status" value="1"/>
</dbReference>
<dbReference type="Pfam" id="PF07478">
    <property type="entry name" value="Dala_Dala_lig_C"/>
    <property type="match status" value="1"/>
</dbReference>
<dbReference type="Pfam" id="PF01820">
    <property type="entry name" value="Dala_Dala_lig_N"/>
    <property type="match status" value="1"/>
</dbReference>
<dbReference type="PIRSF" id="PIRSF039102">
    <property type="entry name" value="Ddl/VanB"/>
    <property type="match status" value="1"/>
</dbReference>
<dbReference type="SUPFAM" id="SSF56059">
    <property type="entry name" value="Glutathione synthetase ATP-binding domain-like"/>
    <property type="match status" value="1"/>
</dbReference>
<dbReference type="SUPFAM" id="SSF52440">
    <property type="entry name" value="PreATP-grasp domain"/>
    <property type="match status" value="1"/>
</dbReference>
<dbReference type="PROSITE" id="PS50975">
    <property type="entry name" value="ATP_GRASP"/>
    <property type="match status" value="1"/>
</dbReference>
<dbReference type="PROSITE" id="PS00843">
    <property type="entry name" value="DALA_DALA_LIGASE_1"/>
    <property type="match status" value="1"/>
</dbReference>
<dbReference type="PROSITE" id="PS00844">
    <property type="entry name" value="DALA_DALA_LIGASE_2"/>
    <property type="match status" value="1"/>
</dbReference>
<organism>
    <name type="scientific">Stutzerimonas stutzeri (strain A1501)</name>
    <name type="common">Pseudomonas stutzeri</name>
    <dbReference type="NCBI Taxonomy" id="379731"/>
    <lineage>
        <taxon>Bacteria</taxon>
        <taxon>Pseudomonadati</taxon>
        <taxon>Pseudomonadota</taxon>
        <taxon>Gammaproteobacteria</taxon>
        <taxon>Pseudomonadales</taxon>
        <taxon>Pseudomonadaceae</taxon>
        <taxon>Stutzerimonas</taxon>
    </lineage>
</organism>
<protein>
    <recommendedName>
        <fullName evidence="2">D-alanine--D-alanine ligase</fullName>
        <ecNumber evidence="2">6.3.2.4</ecNumber>
    </recommendedName>
    <alternativeName>
        <fullName evidence="2">D-Ala-D-Ala ligase</fullName>
    </alternativeName>
    <alternativeName>
        <fullName evidence="2">D-alanylalanine synthetase</fullName>
    </alternativeName>
</protein>
<comment type="function">
    <text evidence="2">Cell wall formation.</text>
</comment>
<comment type="catalytic activity">
    <reaction evidence="2">
        <text>2 D-alanine + ATP = D-alanyl-D-alanine + ADP + phosphate + H(+)</text>
        <dbReference type="Rhea" id="RHEA:11224"/>
        <dbReference type="ChEBI" id="CHEBI:15378"/>
        <dbReference type="ChEBI" id="CHEBI:30616"/>
        <dbReference type="ChEBI" id="CHEBI:43474"/>
        <dbReference type="ChEBI" id="CHEBI:57416"/>
        <dbReference type="ChEBI" id="CHEBI:57822"/>
        <dbReference type="ChEBI" id="CHEBI:456216"/>
        <dbReference type="EC" id="6.3.2.4"/>
    </reaction>
</comment>
<comment type="cofactor">
    <cofactor evidence="1">
        <name>Mg(2+)</name>
        <dbReference type="ChEBI" id="CHEBI:18420"/>
    </cofactor>
    <cofactor evidence="1">
        <name>Mn(2+)</name>
        <dbReference type="ChEBI" id="CHEBI:29035"/>
    </cofactor>
    <text evidence="1">Binds 2 magnesium or manganese ions per subunit.</text>
</comment>
<comment type="pathway">
    <text evidence="2">Cell wall biogenesis; peptidoglycan biosynthesis.</text>
</comment>
<comment type="subcellular location">
    <subcellularLocation>
        <location evidence="2">Cytoplasm</location>
    </subcellularLocation>
</comment>
<comment type="similarity">
    <text evidence="2">Belongs to the D-alanine--D-alanine ligase family.</text>
</comment>
<evidence type="ECO:0000250" key="1"/>
<evidence type="ECO:0000255" key="2">
    <source>
        <dbReference type="HAMAP-Rule" id="MF_00047"/>
    </source>
</evidence>
<feature type="chain" id="PRO_0000341156" description="D-alanine--D-alanine ligase">
    <location>
        <begin position="1"/>
        <end position="314"/>
    </location>
</feature>
<feature type="domain" description="ATP-grasp" evidence="2">
    <location>
        <begin position="112"/>
        <end position="307"/>
    </location>
</feature>
<feature type="binding site" evidence="2">
    <location>
        <begin position="138"/>
        <end position="193"/>
    </location>
    <ligand>
        <name>ATP</name>
        <dbReference type="ChEBI" id="CHEBI:30616"/>
    </ligand>
</feature>
<feature type="binding site" evidence="2">
    <location>
        <position position="261"/>
    </location>
    <ligand>
        <name>Mg(2+)</name>
        <dbReference type="ChEBI" id="CHEBI:18420"/>
        <label>1</label>
    </ligand>
</feature>
<feature type="binding site" evidence="2">
    <location>
        <position position="274"/>
    </location>
    <ligand>
        <name>Mg(2+)</name>
        <dbReference type="ChEBI" id="CHEBI:18420"/>
        <label>1</label>
    </ligand>
</feature>
<feature type="binding site" evidence="2">
    <location>
        <position position="274"/>
    </location>
    <ligand>
        <name>Mg(2+)</name>
        <dbReference type="ChEBI" id="CHEBI:18420"/>
        <label>2</label>
    </ligand>
</feature>
<feature type="binding site" evidence="2">
    <location>
        <position position="276"/>
    </location>
    <ligand>
        <name>Mg(2+)</name>
        <dbReference type="ChEBI" id="CHEBI:18420"/>
        <label>2</label>
    </ligand>
</feature>